<proteinExistence type="inferred from homology"/>
<accession>Q0SN10</accession>
<accession>G0ISE0</accession>
<comment type="function">
    <text evidence="1">Binds to the 23S rRNA.</text>
</comment>
<comment type="subunit">
    <text evidence="1">Part of the 50S ribosomal subunit.</text>
</comment>
<comment type="similarity">
    <text evidence="1">Belongs to the universal ribosomal protein uL15 family.</text>
</comment>
<evidence type="ECO:0000255" key="1">
    <source>
        <dbReference type="HAMAP-Rule" id="MF_01341"/>
    </source>
</evidence>
<evidence type="ECO:0000256" key="2">
    <source>
        <dbReference type="SAM" id="MobiDB-lite"/>
    </source>
</evidence>
<evidence type="ECO:0000305" key="3"/>
<keyword id="KW-0687">Ribonucleoprotein</keyword>
<keyword id="KW-0689">Ribosomal protein</keyword>
<keyword id="KW-0694">RNA-binding</keyword>
<keyword id="KW-0699">rRNA-binding</keyword>
<reference key="1">
    <citation type="journal article" date="2006" name="BMC Genomics">
        <title>Comparative genome analysis: selection pressure on the Borrelia vls cassettes is essential for infectivity.</title>
        <authorList>
            <person name="Gloeckner G."/>
            <person name="Schulte-Spechtel U."/>
            <person name="Schilhabel M."/>
            <person name="Felder M."/>
            <person name="Suehnel J."/>
            <person name="Wilske B."/>
            <person name="Platzer M."/>
        </authorList>
    </citation>
    <scope>NUCLEOTIDE SEQUENCE [LARGE SCALE GENOMIC DNA]</scope>
    <source>
        <strain>PKo</strain>
    </source>
</reference>
<reference key="2">
    <citation type="journal article" date="2011" name="J. Bacteriol.">
        <title>Whole-genome sequences of two Borrelia afzelii and two Borrelia garinii Lyme disease agent isolates.</title>
        <authorList>
            <person name="Casjens S.R."/>
            <person name="Mongodin E.F."/>
            <person name="Qiu W.G."/>
            <person name="Dunn J.J."/>
            <person name="Luft B.J."/>
            <person name="Fraser-Liggett C.M."/>
            <person name="Schutzer S.E."/>
        </authorList>
    </citation>
    <scope>NUCLEOTIDE SEQUENCE [LARGE SCALE GENOMIC DNA]</scope>
    <source>
        <strain>PKo</strain>
    </source>
</reference>
<gene>
    <name evidence="1" type="primary">rplO</name>
    <name type="ordered locus">BAPKO_0525</name>
    <name type="ordered locus">BafPKo_0513</name>
</gene>
<name>RL15_BORAP</name>
<sequence>MFSLLKPKGAAKRRKIVGRGPGSGLGKTSGRGQKGQKARNTSPRLGFEGGQTPLYRRLPRKGFSNNDYKLEYAIVNLGDIDKKFNDGQVVNYDTLLENKLIRKKNKKIKILSNGKLTKKVSLEVSKISKTAESLVMKIGGTIKLV</sequence>
<feature type="chain" id="PRO_1000054430" description="Large ribosomal subunit protein uL15">
    <location>
        <begin position="1"/>
        <end position="145"/>
    </location>
</feature>
<feature type="region of interest" description="Disordered" evidence="2">
    <location>
        <begin position="1"/>
        <end position="58"/>
    </location>
</feature>
<feature type="compositionally biased region" description="Gly residues" evidence="2">
    <location>
        <begin position="19"/>
        <end position="33"/>
    </location>
</feature>
<dbReference type="EMBL" id="CP000395">
    <property type="protein sequence ID" value="ABH01768.1"/>
    <property type="molecule type" value="Genomic_DNA"/>
</dbReference>
<dbReference type="EMBL" id="CP002933">
    <property type="protein sequence ID" value="AEL69721.1"/>
    <property type="molecule type" value="Genomic_DNA"/>
</dbReference>
<dbReference type="RefSeq" id="WP_004789819.1">
    <property type="nucleotide sequence ID" value="NZ_CP160066.1"/>
</dbReference>
<dbReference type="SMR" id="Q0SN10"/>
<dbReference type="STRING" id="29518.BLA32_01775"/>
<dbReference type="GeneID" id="77265344"/>
<dbReference type="KEGG" id="baf:BAPKO_0525"/>
<dbReference type="KEGG" id="bafz:BafPKo_0513"/>
<dbReference type="PATRIC" id="fig|390236.22.peg.494"/>
<dbReference type="eggNOG" id="COG0200">
    <property type="taxonomic scope" value="Bacteria"/>
</dbReference>
<dbReference type="HOGENOM" id="CLU_055188_4_2_12"/>
<dbReference type="OrthoDB" id="9810293at2"/>
<dbReference type="Proteomes" id="UP000005216">
    <property type="component" value="Chromosome"/>
</dbReference>
<dbReference type="GO" id="GO:0022625">
    <property type="term" value="C:cytosolic large ribosomal subunit"/>
    <property type="evidence" value="ECO:0007669"/>
    <property type="project" value="TreeGrafter"/>
</dbReference>
<dbReference type="GO" id="GO:0019843">
    <property type="term" value="F:rRNA binding"/>
    <property type="evidence" value="ECO:0007669"/>
    <property type="project" value="UniProtKB-UniRule"/>
</dbReference>
<dbReference type="GO" id="GO:0003735">
    <property type="term" value="F:structural constituent of ribosome"/>
    <property type="evidence" value="ECO:0007669"/>
    <property type="project" value="InterPro"/>
</dbReference>
<dbReference type="GO" id="GO:0006412">
    <property type="term" value="P:translation"/>
    <property type="evidence" value="ECO:0007669"/>
    <property type="project" value="UniProtKB-UniRule"/>
</dbReference>
<dbReference type="Gene3D" id="3.100.10.10">
    <property type="match status" value="1"/>
</dbReference>
<dbReference type="HAMAP" id="MF_01341">
    <property type="entry name" value="Ribosomal_uL15"/>
    <property type="match status" value="1"/>
</dbReference>
<dbReference type="InterPro" id="IPR030878">
    <property type="entry name" value="Ribosomal_uL15"/>
</dbReference>
<dbReference type="InterPro" id="IPR021131">
    <property type="entry name" value="Ribosomal_uL15/eL18"/>
</dbReference>
<dbReference type="InterPro" id="IPR036227">
    <property type="entry name" value="Ribosomal_uL15/eL18_sf"/>
</dbReference>
<dbReference type="InterPro" id="IPR005749">
    <property type="entry name" value="Ribosomal_uL15_bac-type"/>
</dbReference>
<dbReference type="InterPro" id="IPR001196">
    <property type="entry name" value="Ribosomal_uL15_CS"/>
</dbReference>
<dbReference type="NCBIfam" id="TIGR01071">
    <property type="entry name" value="rplO_bact"/>
    <property type="match status" value="1"/>
</dbReference>
<dbReference type="PANTHER" id="PTHR12934">
    <property type="entry name" value="50S RIBOSOMAL PROTEIN L15"/>
    <property type="match status" value="1"/>
</dbReference>
<dbReference type="PANTHER" id="PTHR12934:SF11">
    <property type="entry name" value="LARGE RIBOSOMAL SUBUNIT PROTEIN UL15M"/>
    <property type="match status" value="1"/>
</dbReference>
<dbReference type="Pfam" id="PF00828">
    <property type="entry name" value="Ribosomal_L27A"/>
    <property type="match status" value="1"/>
</dbReference>
<dbReference type="SUPFAM" id="SSF52080">
    <property type="entry name" value="Ribosomal proteins L15p and L18e"/>
    <property type="match status" value="1"/>
</dbReference>
<dbReference type="PROSITE" id="PS00475">
    <property type="entry name" value="RIBOSOMAL_L15"/>
    <property type="match status" value="1"/>
</dbReference>
<organism>
    <name type="scientific">Borreliella afzelii (strain PKo)</name>
    <name type="common">Borrelia afzelii</name>
    <dbReference type="NCBI Taxonomy" id="390236"/>
    <lineage>
        <taxon>Bacteria</taxon>
        <taxon>Pseudomonadati</taxon>
        <taxon>Spirochaetota</taxon>
        <taxon>Spirochaetia</taxon>
        <taxon>Spirochaetales</taxon>
        <taxon>Borreliaceae</taxon>
        <taxon>Borreliella</taxon>
    </lineage>
</organism>
<protein>
    <recommendedName>
        <fullName evidence="1">Large ribosomal subunit protein uL15</fullName>
    </recommendedName>
    <alternativeName>
        <fullName evidence="3">50S ribosomal protein L15</fullName>
    </alternativeName>
</protein>